<dbReference type="EMBL" id="AY083531">
    <property type="protein sequence ID" value="AAM08924.1"/>
    <property type="molecule type" value="mRNA"/>
</dbReference>
<dbReference type="EMBL" id="AF475086">
    <property type="protein sequence ID" value="AAL84623.1"/>
    <property type="molecule type" value="mRNA"/>
</dbReference>
<dbReference type="EMBL" id="AK030819">
    <property type="protein sequence ID" value="BAC27146.1"/>
    <property type="status" value="ALT_INIT"/>
    <property type="molecule type" value="mRNA"/>
</dbReference>
<dbReference type="EMBL" id="AK033008">
    <property type="protein sequence ID" value="BAC28123.1"/>
    <property type="status" value="ALT_INIT"/>
    <property type="molecule type" value="mRNA"/>
</dbReference>
<dbReference type="EMBL" id="AK035029">
    <property type="protein sequence ID" value="BAC28916.1"/>
    <property type="status" value="ALT_INIT"/>
    <property type="molecule type" value="mRNA"/>
</dbReference>
<dbReference type="CCDS" id="CCDS17900.1"/>
<dbReference type="RefSeq" id="NP_598921.1">
    <property type="nucleotide sequence ID" value="NM_134160.1"/>
</dbReference>
<dbReference type="RefSeq" id="XP_006501144.1">
    <property type="nucleotide sequence ID" value="XM_006501081.2"/>
</dbReference>
<dbReference type="RefSeq" id="XP_006501145.1">
    <property type="nucleotide sequence ID" value="XM_006501082.5"/>
</dbReference>
<dbReference type="RefSeq" id="XP_006501146.1">
    <property type="nucleotide sequence ID" value="XM_006501083.5"/>
</dbReference>
<dbReference type="RefSeq" id="XP_006501147.1">
    <property type="nucleotide sequence ID" value="XM_006501084.5"/>
</dbReference>
<dbReference type="SMR" id="Q8R4F0"/>
<dbReference type="FunCoup" id="Q8R4F0">
    <property type="interactions" value="576"/>
</dbReference>
<dbReference type="STRING" id="10090.ENSMUSP00000038801"/>
<dbReference type="GuidetoPHARMACOLOGY" id="503"/>
<dbReference type="TCDB" id="1.A.5.3.2">
    <property type="family name" value="the polycystin cation channel (pcc) family"/>
</dbReference>
<dbReference type="GlyCosmos" id="Q8R4F0">
    <property type="glycosylation" value="2 sites, No reported glycans"/>
</dbReference>
<dbReference type="GlyGen" id="Q8R4F0">
    <property type="glycosylation" value="2 sites"/>
</dbReference>
<dbReference type="iPTMnet" id="Q8R4F0"/>
<dbReference type="PhosphoSitePlus" id="Q8R4F0"/>
<dbReference type="SwissPalm" id="Q8R4F0"/>
<dbReference type="PaxDb" id="10090-ENSMUSP00000038801"/>
<dbReference type="ProteomicsDB" id="252751"/>
<dbReference type="ABCD" id="Q8R4F0">
    <property type="antibodies" value="1 sequenced antibody"/>
</dbReference>
<dbReference type="Antibodypedia" id="19787">
    <property type="antibodies" value="157 antibodies from 28 providers"/>
</dbReference>
<dbReference type="DNASU" id="171166"/>
<dbReference type="Ensembl" id="ENSMUST00000039450.5">
    <property type="protein sequence ID" value="ENSMUSP00000038801.5"/>
    <property type="gene ID" value="ENSMUSG00000036853.6"/>
</dbReference>
<dbReference type="GeneID" id="171166"/>
<dbReference type="KEGG" id="mmu:171166"/>
<dbReference type="UCSC" id="uc008rqx.1">
    <property type="organism name" value="mouse"/>
</dbReference>
<dbReference type="AGR" id="MGI:1890500"/>
<dbReference type="CTD" id="55283"/>
<dbReference type="MGI" id="MGI:1890500">
    <property type="gene designation" value="Mcoln3"/>
</dbReference>
<dbReference type="VEuPathDB" id="HostDB:ENSMUSG00000036853"/>
<dbReference type="eggNOG" id="KOG3733">
    <property type="taxonomic scope" value="Eukaryota"/>
</dbReference>
<dbReference type="GeneTree" id="ENSGT00950000183036"/>
<dbReference type="HOGENOM" id="CLU_020945_1_1_1"/>
<dbReference type="InParanoid" id="Q8R4F0"/>
<dbReference type="OMA" id="WQARRKF"/>
<dbReference type="OrthoDB" id="263481at2759"/>
<dbReference type="PhylomeDB" id="Q8R4F0"/>
<dbReference type="TreeFam" id="TF317783"/>
<dbReference type="Reactome" id="R-MMU-3295583">
    <property type="pathway name" value="TRP channels"/>
</dbReference>
<dbReference type="BioGRID-ORCS" id="171166">
    <property type="hits" value="1 hit in 76 CRISPR screens"/>
</dbReference>
<dbReference type="ChiTaRS" id="Mcoln3">
    <property type="organism name" value="mouse"/>
</dbReference>
<dbReference type="PRO" id="PR:Q8R4F0"/>
<dbReference type="Proteomes" id="UP000000589">
    <property type="component" value="Chromosome 3"/>
</dbReference>
<dbReference type="RNAct" id="Q8R4F0">
    <property type="molecule type" value="protein"/>
</dbReference>
<dbReference type="Bgee" id="ENSMUSG00000036853">
    <property type="expression patterns" value="Expressed in vestibular membrane of cochlear duct and 108 other cell types or tissues"/>
</dbReference>
<dbReference type="ExpressionAtlas" id="Q8R4F0">
    <property type="expression patterns" value="baseline and differential"/>
</dbReference>
<dbReference type="GO" id="GO:0000421">
    <property type="term" value="C:autophagosome membrane"/>
    <property type="evidence" value="ECO:0007669"/>
    <property type="project" value="UniProtKB-SubCell"/>
</dbReference>
<dbReference type="GO" id="GO:0005737">
    <property type="term" value="C:cytoplasm"/>
    <property type="evidence" value="ECO:0000314"/>
    <property type="project" value="MGI"/>
</dbReference>
<dbReference type="GO" id="GO:0031901">
    <property type="term" value="C:early endosome membrane"/>
    <property type="evidence" value="ECO:0007669"/>
    <property type="project" value="UniProtKB-SubCell"/>
</dbReference>
<dbReference type="GO" id="GO:0031902">
    <property type="term" value="C:late endosome membrane"/>
    <property type="evidence" value="ECO:0007669"/>
    <property type="project" value="UniProtKB-SubCell"/>
</dbReference>
<dbReference type="GO" id="GO:0005886">
    <property type="term" value="C:plasma membrane"/>
    <property type="evidence" value="ECO:0000314"/>
    <property type="project" value="MGI"/>
</dbReference>
<dbReference type="GO" id="GO:0060171">
    <property type="term" value="C:stereocilium membrane"/>
    <property type="evidence" value="ECO:0007669"/>
    <property type="project" value="UniProtKB-SubCell"/>
</dbReference>
<dbReference type="GO" id="GO:0008289">
    <property type="term" value="F:lipid binding"/>
    <property type="evidence" value="ECO:0007669"/>
    <property type="project" value="UniProtKB-KW"/>
</dbReference>
<dbReference type="GO" id="GO:0005253">
    <property type="term" value="F:monoatomic anion channel activity"/>
    <property type="evidence" value="ECO:0000314"/>
    <property type="project" value="UniProtKB"/>
</dbReference>
<dbReference type="GO" id="GO:0005267">
    <property type="term" value="F:potassium channel activity"/>
    <property type="evidence" value="ECO:0000314"/>
    <property type="project" value="UniProtKB"/>
</dbReference>
<dbReference type="GO" id="GO:0005272">
    <property type="term" value="F:sodium channel activity"/>
    <property type="evidence" value="ECO:0000314"/>
    <property type="project" value="UniProtKB"/>
</dbReference>
<dbReference type="GO" id="GO:0042491">
    <property type="term" value="P:inner ear auditory receptor cell differentiation"/>
    <property type="evidence" value="ECO:0000315"/>
    <property type="project" value="MGI"/>
</dbReference>
<dbReference type="GO" id="GO:0007626">
    <property type="term" value="P:locomotory behavior"/>
    <property type="evidence" value="ECO:0000315"/>
    <property type="project" value="MGI"/>
</dbReference>
<dbReference type="CDD" id="cd21072">
    <property type="entry name" value="ELD_TRPML3"/>
    <property type="match status" value="1"/>
</dbReference>
<dbReference type="FunFam" id="1.10.287.70:FF:000033">
    <property type="entry name" value="Mucolipin 1"/>
    <property type="match status" value="1"/>
</dbReference>
<dbReference type="Gene3D" id="1.10.287.70">
    <property type="match status" value="1"/>
</dbReference>
<dbReference type="InterPro" id="IPR049134">
    <property type="entry name" value="MCLN_ECD"/>
</dbReference>
<dbReference type="InterPro" id="IPR047317">
    <property type="entry name" value="MCOLN3_ELD"/>
</dbReference>
<dbReference type="InterPro" id="IPR039031">
    <property type="entry name" value="Mucolipin"/>
</dbReference>
<dbReference type="InterPro" id="IPR013122">
    <property type="entry name" value="PKD1_2_channel"/>
</dbReference>
<dbReference type="PANTHER" id="PTHR12127">
    <property type="entry name" value="MUCOLIPIN"/>
    <property type="match status" value="1"/>
</dbReference>
<dbReference type="PANTHER" id="PTHR12127:SF5">
    <property type="entry name" value="MUCOLIPIN-3"/>
    <property type="match status" value="1"/>
</dbReference>
<dbReference type="Pfam" id="PF21381">
    <property type="entry name" value="MCLN_ECD"/>
    <property type="match status" value="1"/>
</dbReference>
<dbReference type="Pfam" id="PF08016">
    <property type="entry name" value="PKD_channel"/>
    <property type="match status" value="1"/>
</dbReference>
<comment type="function">
    <text evidence="2 6 8 10">Nonselective cation channel probably playing a role in the regulation of membrane trafficking events. Acts as a Ca(2+)-permeable cation channel with inwardly rectifying activity (PubMed:17989217). Mediates release of Ca(2+) from endosomes to the cytoplasm, contributes to endosomal acidification and is involved in the regulation of membrane trafficking and fusion in the endosomal pathway (By similarity). Also permeable to Mg(2+), Na(+) and K(+) (PubMed:17989217). Does not seem to act as mechanosensory transduction channel in inner ear sensory hair cells. Proposed to play a critical role at the cochlear stereocilia ankle-link region during hair-bundle growth (PubMed:18801844). Involved in the regulation of autophagy. Through association with GABARAPL2 may be involved in autophagosome formation possibly providing Ca(2+) for the fusion process (PubMed:24269818). Through a possible and probably tissue-specific heteromerization with MCOLN1 may be at least in part involved in many lysosome-dependent cellular events. Possible heteromeric ion channel assemblies with TRPV5 show pharmacological similarity with TRPML3 (By similarity).</text>
</comment>
<comment type="catalytic activity">
    <reaction evidence="6">
        <text>Ca(2+)(in) = Ca(2+)(out)</text>
        <dbReference type="Rhea" id="RHEA:29671"/>
        <dbReference type="ChEBI" id="CHEBI:29108"/>
    </reaction>
</comment>
<comment type="catalytic activity">
    <reaction evidence="6">
        <text>Mg(2+)(in) = Mg(2+)(out)</text>
        <dbReference type="Rhea" id="RHEA:29827"/>
        <dbReference type="ChEBI" id="CHEBI:18420"/>
    </reaction>
</comment>
<comment type="catalytic activity">
    <reaction evidence="6">
        <text>K(+)(in) = K(+)(out)</text>
        <dbReference type="Rhea" id="RHEA:29463"/>
        <dbReference type="ChEBI" id="CHEBI:29103"/>
    </reaction>
</comment>
<comment type="catalytic activity">
    <reaction evidence="6">
        <text>Na(+)(in) = Na(+)(out)</text>
        <dbReference type="Rhea" id="RHEA:34963"/>
        <dbReference type="ChEBI" id="CHEBI:29101"/>
    </reaction>
</comment>
<comment type="activity regulation">
    <text evidence="1 2">Channel activity is activated by PtdIns(3,5)P2 (phosphatidylinositol 3,5-bisphosphate) (By similarity). Inhibited by lumenal H(+) and Na(+). The channel pore shows dynamic behavior and undergoes spontaneous, Ca(2+)-dependent modulation when conducting Ca(2+) (By similarity).</text>
</comment>
<comment type="subunit">
    <text evidence="2 10">Homotetramer. Can heterooligomerize with MCOLN1; heteromeric assemblies have different channel properties as compared to the respective homooligomers and may be tissue-specific. May heterooligomerize with TRPV5 to form a functional distinct ion channel (By similarity). Interacts with GABARAPL2 (PubMed:24269818).</text>
</comment>
<comment type="subcellular location">
    <subcellularLocation>
        <location evidence="2">Early endosome membrane</location>
        <topology evidence="1">Multi-pass membrane protein</topology>
    </subcellularLocation>
    <subcellularLocation>
        <location evidence="6">Late endosome membrane</location>
        <topology evidence="1">Multi-pass membrane protein</topology>
    </subcellularLocation>
    <subcellularLocation>
        <location evidence="10">Cytoplasmic vesicle</location>
        <location evidence="10">Autophagosome membrane</location>
        <topology evidence="1">Multi-pass membrane protein</topology>
    </subcellularLocation>
    <subcellularLocation>
        <location evidence="8">Cell projection</location>
        <location evidence="8">Stereocilium membrane</location>
        <topology evidence="1">Multi-pass membrane protein</topology>
    </subcellularLocation>
    <text evidence="2 8">Recycles between the plasma membrane and intracellular compartments by a dynamin-dependent endocytic pathway (By similarity). In the cochlea located at the base of stereocilia near the position of the ankle links.</text>
</comment>
<comment type="tissue specificity">
    <text evidence="5 8">Expressed in the cochlea; particularly in the inner and outer hair cells (at protein level).</text>
</comment>
<comment type="domain">
    <text evidence="3">The most N-terminal extracellular/lumenal domain (referred to as I-II linker or polycystin-mucolipin domain) contributes to a structure with a four-fold rotational symmetry in a tetrameric assembly; the structure contains a central highly electronegative pore with a 14 A diameter. The pore is critical for Ca(2+) and pH regulation. The protruding structure formed by the I-II linkers may contain all the interaction sites with lipids and proteins in the endolysosomal lumen.</text>
</comment>
<comment type="PTM">
    <text evidence="2">N-glycosylated.</text>
</comment>
<comment type="disease">
    <text evidence="5 7">Defects in Mcoln3 are the cause of the varitin-waddler (Va) phenotype. Classical Va mice exhibit early-onset hearing loss, vestibular defects, pigmentation abnormalities and perinatal lethality. The phenotype varitin-waddler Jackcon (Va-J), which arose in a cross segregating for Va, is similar but less severe.</text>
</comment>
<comment type="disruption phenotype">
    <text evidence="9">No severe auditory and vestibular phenotype; does not lead to circling behavior, balance impairment or hearing loss.</text>
</comment>
<comment type="similarity">
    <text evidence="11">Belongs to the transient receptor (TC 1.A.4) family. Polycystin subfamily. MCOLN3 sub-subfamily.</text>
</comment>
<comment type="sequence caution" evidence="11">
    <conflict type="erroneous initiation">
        <sequence resource="EMBL-CDS" id="BAC27146"/>
    </conflict>
</comment>
<comment type="sequence caution" evidence="11">
    <conflict type="erroneous initiation">
        <sequence resource="EMBL-CDS" id="BAC28123"/>
    </conflict>
</comment>
<comment type="sequence caution" evidence="11">
    <conflict type="erroneous initiation">
        <sequence resource="EMBL-CDS" id="BAC28916"/>
    </conflict>
</comment>
<evidence type="ECO:0000250" key="1">
    <source>
        <dbReference type="UniProtKB" id="F6RG56"/>
    </source>
</evidence>
<evidence type="ECO:0000250" key="2">
    <source>
        <dbReference type="UniProtKB" id="Q8TDD5"/>
    </source>
</evidence>
<evidence type="ECO:0000250" key="3">
    <source>
        <dbReference type="UniProtKB" id="Q9GZU1"/>
    </source>
</evidence>
<evidence type="ECO:0000255" key="4"/>
<evidence type="ECO:0000269" key="5">
    <source>
    </source>
</evidence>
<evidence type="ECO:0000269" key="6">
    <source>
    </source>
</evidence>
<evidence type="ECO:0000269" key="7">
    <source>
    </source>
</evidence>
<evidence type="ECO:0000269" key="8">
    <source>
    </source>
</evidence>
<evidence type="ECO:0000269" key="9">
    <source>
    </source>
</evidence>
<evidence type="ECO:0000269" key="10">
    <source>
    </source>
</evidence>
<evidence type="ECO:0000305" key="11"/>
<accession>Q8R4F0</accession>
<accession>Q8BS73</accession>
<accession>Q8BSG1</accession>
<accession>Q8CDB2</accession>
<reference key="1">
    <citation type="journal article" date="2002" name="Proc. Natl. Acad. Sci. U.S.A.">
        <title>Mutations in Mcoln3 associated with deafness and pigmentation defects in varitint-waddler (Va) mice.</title>
        <authorList>
            <person name="Di Palma F."/>
            <person name="Belyantseva I.A."/>
            <person name="Kim H.J."/>
            <person name="Vogt T.F."/>
            <person name="Kachar B."/>
            <person name="Noben-Trauth K."/>
        </authorList>
    </citation>
    <scope>NUCLEOTIDE SEQUENCE [MRNA]</scope>
    <scope>TISSUE SPECIFICITY</scope>
    <scope>VARIANTS THR-362 AND PRO-419</scope>
    <source>
        <strain>C57BL/6J</strain>
    </source>
</reference>
<reference key="2">
    <citation type="submission" date="2002-01" db="EMBL/GenBank/DDBJ databases">
        <title>Cloning of the mouse Mcoln3 gene.</title>
        <authorList>
            <person name="Falardeau J.L."/>
            <person name="Kennedy J.C."/>
            <person name="Acierno J.S. Jr."/>
            <person name="Slaugenhaupt S.A."/>
        </authorList>
    </citation>
    <scope>NUCLEOTIDE SEQUENCE [MRNA]</scope>
    <source>
        <strain>C57BL/6J</strain>
    </source>
</reference>
<reference key="3">
    <citation type="journal article" date="2005" name="Science">
        <title>The transcriptional landscape of the mammalian genome.</title>
        <authorList>
            <person name="Carninci P."/>
            <person name="Kasukawa T."/>
            <person name="Katayama S."/>
            <person name="Gough J."/>
            <person name="Frith M.C."/>
            <person name="Maeda N."/>
            <person name="Oyama R."/>
            <person name="Ravasi T."/>
            <person name="Lenhard B."/>
            <person name="Wells C."/>
            <person name="Kodzius R."/>
            <person name="Shimokawa K."/>
            <person name="Bajic V.B."/>
            <person name="Brenner S.E."/>
            <person name="Batalov S."/>
            <person name="Forrest A.R."/>
            <person name="Zavolan M."/>
            <person name="Davis M.J."/>
            <person name="Wilming L.G."/>
            <person name="Aidinis V."/>
            <person name="Allen J.E."/>
            <person name="Ambesi-Impiombato A."/>
            <person name="Apweiler R."/>
            <person name="Aturaliya R.N."/>
            <person name="Bailey T.L."/>
            <person name="Bansal M."/>
            <person name="Baxter L."/>
            <person name="Beisel K.W."/>
            <person name="Bersano T."/>
            <person name="Bono H."/>
            <person name="Chalk A.M."/>
            <person name="Chiu K.P."/>
            <person name="Choudhary V."/>
            <person name="Christoffels A."/>
            <person name="Clutterbuck D.R."/>
            <person name="Crowe M.L."/>
            <person name="Dalla E."/>
            <person name="Dalrymple B.P."/>
            <person name="de Bono B."/>
            <person name="Della Gatta G."/>
            <person name="di Bernardo D."/>
            <person name="Down T."/>
            <person name="Engstrom P."/>
            <person name="Fagiolini M."/>
            <person name="Faulkner G."/>
            <person name="Fletcher C.F."/>
            <person name="Fukushima T."/>
            <person name="Furuno M."/>
            <person name="Futaki S."/>
            <person name="Gariboldi M."/>
            <person name="Georgii-Hemming P."/>
            <person name="Gingeras T.R."/>
            <person name="Gojobori T."/>
            <person name="Green R.E."/>
            <person name="Gustincich S."/>
            <person name="Harbers M."/>
            <person name="Hayashi Y."/>
            <person name="Hensch T.K."/>
            <person name="Hirokawa N."/>
            <person name="Hill D."/>
            <person name="Huminiecki L."/>
            <person name="Iacono M."/>
            <person name="Ikeo K."/>
            <person name="Iwama A."/>
            <person name="Ishikawa T."/>
            <person name="Jakt M."/>
            <person name="Kanapin A."/>
            <person name="Katoh M."/>
            <person name="Kawasawa Y."/>
            <person name="Kelso J."/>
            <person name="Kitamura H."/>
            <person name="Kitano H."/>
            <person name="Kollias G."/>
            <person name="Krishnan S.P."/>
            <person name="Kruger A."/>
            <person name="Kummerfeld S.K."/>
            <person name="Kurochkin I.V."/>
            <person name="Lareau L.F."/>
            <person name="Lazarevic D."/>
            <person name="Lipovich L."/>
            <person name="Liu J."/>
            <person name="Liuni S."/>
            <person name="McWilliam S."/>
            <person name="Madan Babu M."/>
            <person name="Madera M."/>
            <person name="Marchionni L."/>
            <person name="Matsuda H."/>
            <person name="Matsuzawa S."/>
            <person name="Miki H."/>
            <person name="Mignone F."/>
            <person name="Miyake S."/>
            <person name="Morris K."/>
            <person name="Mottagui-Tabar S."/>
            <person name="Mulder N."/>
            <person name="Nakano N."/>
            <person name="Nakauchi H."/>
            <person name="Ng P."/>
            <person name="Nilsson R."/>
            <person name="Nishiguchi S."/>
            <person name="Nishikawa S."/>
            <person name="Nori F."/>
            <person name="Ohara O."/>
            <person name="Okazaki Y."/>
            <person name="Orlando V."/>
            <person name="Pang K.C."/>
            <person name="Pavan W.J."/>
            <person name="Pavesi G."/>
            <person name="Pesole G."/>
            <person name="Petrovsky N."/>
            <person name="Piazza S."/>
            <person name="Reed J."/>
            <person name="Reid J.F."/>
            <person name="Ring B.Z."/>
            <person name="Ringwald M."/>
            <person name="Rost B."/>
            <person name="Ruan Y."/>
            <person name="Salzberg S.L."/>
            <person name="Sandelin A."/>
            <person name="Schneider C."/>
            <person name="Schoenbach C."/>
            <person name="Sekiguchi K."/>
            <person name="Semple C.A."/>
            <person name="Seno S."/>
            <person name="Sessa L."/>
            <person name="Sheng Y."/>
            <person name="Shibata Y."/>
            <person name="Shimada H."/>
            <person name="Shimada K."/>
            <person name="Silva D."/>
            <person name="Sinclair B."/>
            <person name="Sperling S."/>
            <person name="Stupka E."/>
            <person name="Sugiura K."/>
            <person name="Sultana R."/>
            <person name="Takenaka Y."/>
            <person name="Taki K."/>
            <person name="Tammoja K."/>
            <person name="Tan S.L."/>
            <person name="Tang S."/>
            <person name="Taylor M.S."/>
            <person name="Tegner J."/>
            <person name="Teichmann S.A."/>
            <person name="Ueda H.R."/>
            <person name="van Nimwegen E."/>
            <person name="Verardo R."/>
            <person name="Wei C.L."/>
            <person name="Yagi K."/>
            <person name="Yamanishi H."/>
            <person name="Zabarovsky E."/>
            <person name="Zhu S."/>
            <person name="Zimmer A."/>
            <person name="Hide W."/>
            <person name="Bult C."/>
            <person name="Grimmond S.M."/>
            <person name="Teasdale R.D."/>
            <person name="Liu E.T."/>
            <person name="Brusic V."/>
            <person name="Quackenbush J."/>
            <person name="Wahlestedt C."/>
            <person name="Mattick J.S."/>
            <person name="Hume D.A."/>
            <person name="Kai C."/>
            <person name="Sasaki D."/>
            <person name="Tomaru Y."/>
            <person name="Fukuda S."/>
            <person name="Kanamori-Katayama M."/>
            <person name="Suzuki M."/>
            <person name="Aoki J."/>
            <person name="Arakawa T."/>
            <person name="Iida J."/>
            <person name="Imamura K."/>
            <person name="Itoh M."/>
            <person name="Kato T."/>
            <person name="Kawaji H."/>
            <person name="Kawagashira N."/>
            <person name="Kawashima T."/>
            <person name="Kojima M."/>
            <person name="Kondo S."/>
            <person name="Konno H."/>
            <person name="Nakano K."/>
            <person name="Ninomiya N."/>
            <person name="Nishio T."/>
            <person name="Okada M."/>
            <person name="Plessy C."/>
            <person name="Shibata K."/>
            <person name="Shiraki T."/>
            <person name="Suzuki S."/>
            <person name="Tagami M."/>
            <person name="Waki K."/>
            <person name="Watahiki A."/>
            <person name="Okamura-Oho Y."/>
            <person name="Suzuki H."/>
            <person name="Kawai J."/>
            <person name="Hayashizaki Y."/>
        </authorList>
    </citation>
    <scope>NUCLEOTIDE SEQUENCE [LARGE SCALE MRNA]</scope>
    <source>
        <strain>C57BL/6J</strain>
        <tissue>Embryo</tissue>
        <tissue>Mesonephros</tissue>
        <tissue>Thymus</tissue>
    </source>
</reference>
<reference key="4">
    <citation type="journal article" date="2007" name="Proc. Natl. Acad. Sci. U.S.A.">
        <title>Activating mutation in a mucolipin transient receptor potential channel leads to melanocyte loss in varitint-waddler mice.</title>
        <authorList>
            <person name="Xu H."/>
            <person name="Delling M."/>
            <person name="Li L."/>
            <person name="Dong X."/>
            <person name="Clapham D.E."/>
        </authorList>
    </citation>
    <scope>FUNCTION</scope>
    <scope>TRANSPORTER ACTIVITY</scope>
    <scope>MUTAGENESIS OF 458-ASP-ASP-459</scope>
    <scope>CHARACTERIZATION OF VARIANT PRO-419</scope>
</reference>
<reference key="5">
    <citation type="journal article" date="2007" name="Proc. Natl. Acad. Sci. U.S.A.">
        <title>A helix-breaking mutation in TRPML3 leads to constitutive activity underlying deafness in the varitint-waddler mouse.</title>
        <authorList>
            <person name="Grimm C."/>
            <person name="Cuajungco M.P."/>
            <person name="van Aken A.F."/>
            <person name="Schnee M."/>
            <person name="Joers S."/>
            <person name="Kros C.J."/>
            <person name="Ricci A.J."/>
            <person name="Heller S."/>
        </authorList>
    </citation>
    <scope>CHARACTERIZATION OF VARIANT PRO-419</scope>
</reference>
<reference key="6">
    <citation type="journal article" date="2008" name="J. Physiol. (Lond.)">
        <title>TRPML3 mutations cause impaired mechano-electrical transduction and depolarization by an inward-rectifier cation current in auditory hair cells of varitint-waddler mice.</title>
        <authorList>
            <person name="van Aken A.F."/>
            <person name="Atiba-Davies M."/>
            <person name="Marcotti W."/>
            <person name="Goodyear R.J."/>
            <person name="Bryant J.E."/>
            <person name="Richardson G.P."/>
            <person name="Noben-Trauth K."/>
            <person name="Kros C.J."/>
        </authorList>
    </citation>
    <scope>FUNCTION</scope>
    <scope>TISSUE SPECIFICITY</scope>
    <scope>SUBCELLULAR LOCATION</scope>
</reference>
<reference key="7">
    <citation type="journal article" date="2010" name="PLoS ONE">
        <title>Genetic inactivation of Trpml3 does not lead to hearing and vestibular impairment in mice.</title>
        <authorList>
            <person name="Joers S."/>
            <person name="Grimm C."/>
            <person name="Becker L."/>
            <person name="Heller S."/>
        </authorList>
    </citation>
    <scope>DISRUPTION PHENOTYPE</scope>
</reference>
<reference key="8">
    <citation type="journal article" date="2014" name="Biochem. Biophys. Res. Commun.">
        <title>The Ca2+ channel TRPML3 specifically interacts with the mammalian ATG8 homologue GATE16 to regulate autophagy.</title>
        <authorList>
            <person name="Choi S."/>
            <person name="Kim H.J."/>
        </authorList>
    </citation>
    <scope>FUNCTION</scope>
    <scope>INTERACTION WITH GABARAPL2</scope>
    <scope>SUBCELLULAR LOCATION</scope>
</reference>
<protein>
    <recommendedName>
        <fullName>Mucolipin-3</fullName>
    </recommendedName>
    <alternativeName>
        <fullName>Transient receptor potential channel mucolipin 3</fullName>
        <shortName>TRPML3</shortName>
    </alternativeName>
</protein>
<feature type="chain" id="PRO_0000215368" description="Mucolipin-3">
    <location>
        <begin position="1"/>
        <end position="553"/>
    </location>
</feature>
<feature type="topological domain" description="Cytoplasmic" evidence="1">
    <location>
        <begin position="1"/>
        <end position="62"/>
    </location>
</feature>
<feature type="transmembrane region" description="Helical" evidence="1">
    <location>
        <begin position="63"/>
        <end position="83"/>
    </location>
</feature>
<feature type="topological domain" description="Extracellular" evidence="1">
    <location>
        <begin position="84"/>
        <end position="283"/>
    </location>
</feature>
<feature type="transmembrane region" description="Helical" evidence="1">
    <location>
        <begin position="284"/>
        <end position="304"/>
    </location>
</feature>
<feature type="topological domain" description="Cytoplasmic" evidence="1">
    <location>
        <begin position="305"/>
        <end position="341"/>
    </location>
</feature>
<feature type="transmembrane region" description="Helical" evidence="1">
    <location>
        <begin position="342"/>
        <end position="362"/>
    </location>
</feature>
<feature type="topological domain" description="Extracellular" evidence="1">
    <location>
        <begin position="363"/>
        <end position="371"/>
    </location>
</feature>
<feature type="transmembrane region" description="Helical" evidence="1">
    <location>
        <begin position="372"/>
        <end position="392"/>
    </location>
</feature>
<feature type="topological domain" description="Cytoplasmic" evidence="1">
    <location>
        <begin position="393"/>
        <end position="414"/>
    </location>
</feature>
<feature type="transmembrane region" description="Helical" evidence="1">
    <location>
        <begin position="415"/>
        <end position="435"/>
    </location>
</feature>
<feature type="topological domain" description="Extracellular" evidence="1">
    <location>
        <begin position="436"/>
        <end position="443"/>
    </location>
</feature>
<feature type="intramembrane region" description="Pore-forming" evidence="1">
    <location>
        <begin position="444"/>
        <end position="464"/>
    </location>
</feature>
<feature type="topological domain" description="Extracellular" evidence="1">
    <location>
        <begin position="465"/>
        <end position="475"/>
    </location>
</feature>
<feature type="transmembrane region" description="Helical" evidence="1">
    <location>
        <begin position="476"/>
        <end position="497"/>
    </location>
</feature>
<feature type="topological domain" description="Cytoplasmic" evidence="1">
    <location>
        <begin position="498"/>
        <end position="553"/>
    </location>
</feature>
<feature type="region of interest" description="Interaction with phosphoinositides" evidence="1">
    <location>
        <begin position="52"/>
        <end position="62"/>
    </location>
</feature>
<feature type="region of interest" description="Extracellular/lumenal pore loop" evidence="3">
    <location>
        <begin position="104"/>
        <end position="118"/>
    </location>
</feature>
<feature type="short sequence motif" description="Selectivity filter" evidence="1">
    <location>
        <begin position="456"/>
        <end position="459"/>
    </location>
</feature>
<feature type="site" description="Interaction with phosphoinositides" evidence="1">
    <location>
        <position position="305"/>
    </location>
</feature>
<feature type="glycosylation site" description="N-linked (GlcNAc...) asparagine" evidence="4">
    <location>
        <position position="138"/>
    </location>
</feature>
<feature type="glycosylation site" description="N-linked (GlcNAc...) asparagine" evidence="4">
    <location>
        <position position="205"/>
    </location>
</feature>
<feature type="disulfide bond" evidence="3">
    <location>
        <begin position="159"/>
        <end position="185"/>
    </location>
</feature>
<feature type="disulfide bond" evidence="3">
    <location>
        <begin position="238"/>
        <end position="269"/>
    </location>
</feature>
<feature type="sequence variant" description="In Va-J." evidence="5">
    <original>I</original>
    <variation>T</variation>
    <location>
        <position position="362"/>
    </location>
</feature>
<feature type="sequence variant" description="In Va and Va-J; constitutive active cation channel localized to plasma membrane." evidence="5 6 7">
    <original>A</original>
    <variation>P</variation>
    <location>
        <position position="419"/>
    </location>
</feature>
<feature type="mutagenesis site" description="Abolishes channel activity." evidence="6">
    <original>DD</original>
    <variation>KK</variation>
    <location>
        <begin position="458"/>
        <end position="459"/>
    </location>
</feature>
<feature type="sequence conflict" description="In Ref. 3; BAC27146." evidence="11" ref="3">
    <original>A</original>
    <variation>D</variation>
    <location>
        <position position="193"/>
    </location>
</feature>
<feature type="sequence conflict" description="In Ref. 3; BAC27146." evidence="11" ref="3">
    <original>M</original>
    <variation>K</variation>
    <location>
        <position position="467"/>
    </location>
</feature>
<feature type="sequence conflict" description="In Ref. 3; BAC28916." evidence="11" ref="3">
    <original>P</original>
    <variation>A</variation>
    <location>
        <position position="543"/>
    </location>
</feature>
<gene>
    <name type="primary">Mcoln3</name>
</gene>
<sequence length="553" mass="63748">MANPEVLVSSCRARQDESPCTFHPSSSPSEQLLLEDQMRRKLKFFFMNPCEKFWARGRKPWKLAIQILKIAMVTIQLVLFGLSNQMVVAFKEENTIAFKHLFLKGYMDRMDDTYAVYTQSEVYDQIIFAVTQYLQLQNISVGNHAYENKGTKQSAMAICQHFYRQGTICPGNDTFDIDPEVETECFLVEPDEASHLGTPGENKLNLSLDFHRLLTVELQFKLKAINLQTVRHQELPDCYDFTLTITFDNKAHSGRIKISLDNDISIKECKDWHVSGSIQKNTHYMMIFDAFVILTCLASLVLCARSVIRGLQLQQEFVNFFLLHYKKEVSASDQMEFINGWYIMIIISDILTIVGSVLKMEIQAKSLTSYDVCSILLGTSTMLVWLGVIRYLGFFAKYNLLILTLQAALPNVMRFCCCAAMIYLGYCFCGWIVLGPYHEKFRSLNRVSECLFSLINGDDMFSTFAKMQQKSYLVWLFSRVYLYSFISLFIYMILSLFIALITDTYETIKHYQQDGFPETELRKFIAECKDLPNSGKYRLEDDPPGSLLCCCKK</sequence>
<keyword id="KW-1003">Cell membrane</keyword>
<keyword id="KW-0966">Cell projection</keyword>
<keyword id="KW-0968">Cytoplasmic vesicle</keyword>
<keyword id="KW-0225">Disease variant</keyword>
<keyword id="KW-1015">Disulfide bond</keyword>
<keyword id="KW-0967">Endosome</keyword>
<keyword id="KW-0325">Glycoprotein</keyword>
<keyword id="KW-0407">Ion channel</keyword>
<keyword id="KW-0406">Ion transport</keyword>
<keyword id="KW-0446">Lipid-binding</keyword>
<keyword id="KW-0472">Membrane</keyword>
<keyword id="KW-1185">Reference proteome</keyword>
<keyword id="KW-0812">Transmembrane</keyword>
<keyword id="KW-1133">Transmembrane helix</keyword>
<keyword id="KW-0813">Transport</keyword>
<proteinExistence type="evidence at protein level"/>
<name>MCLN3_MOUSE</name>
<organism>
    <name type="scientific">Mus musculus</name>
    <name type="common">Mouse</name>
    <dbReference type="NCBI Taxonomy" id="10090"/>
    <lineage>
        <taxon>Eukaryota</taxon>
        <taxon>Metazoa</taxon>
        <taxon>Chordata</taxon>
        <taxon>Craniata</taxon>
        <taxon>Vertebrata</taxon>
        <taxon>Euteleostomi</taxon>
        <taxon>Mammalia</taxon>
        <taxon>Eutheria</taxon>
        <taxon>Euarchontoglires</taxon>
        <taxon>Glires</taxon>
        <taxon>Rodentia</taxon>
        <taxon>Myomorpha</taxon>
        <taxon>Muroidea</taxon>
        <taxon>Muridae</taxon>
        <taxon>Murinae</taxon>
        <taxon>Mus</taxon>
        <taxon>Mus</taxon>
    </lineage>
</organism>